<sequence>MSDYSTGGPPPGPPPPAGGGGGAGGAGGGPPPGPPGAGDRGGGGPGGGGPGGGSAGGPSQPPGGGGPGIRKDAFADAVQRARQIAAKIGGDAATTVNNSTPDFGFGGQKRQLEDGDQPESKKLASQGDSISSQLGPIHPPPRTSMTEEYRVPDGMVGLIIGRGGEQINKIQQDSGCKVQISPDSGGLPERSVSLTGAPESVQKAKMMLDDIVSRGRGGPPGQFHDNANGGQNGTVQEIMIPAGKAGLVIGKGGETIKQLQERAGVKMILIQDGSQNTNVDKPLRIIGDPYKVQQACEMVMDILRERDQGGFGDRNEYGSRIGGGIDVPVPRHSVGVVIGRSGEMIKKIQNDAGVRIQFKQDDGTGPEKIAHIMGPPDRCEHAARIINDLLQSLRSGPPGPPGGPGMPPGGRGRGRGQGNWGPPGGEMTFSIPTHKCGLVIGRGGENVKAINQQTGAFVEISRQLPPNGDPNFKLFIIRGSPQQIDHAKQLIEEKIEGPLCPVGPGPGGPGPAGPMGPFNPGPFNQGPPGAPPHAGGPPPHQYPPQGWGNTYPQWQPPAPHDPSKAAAAAADPNAAWAAYYSHYYQQPPGPVPGPAPAPAAPPAQGEPPQPPPTGQSDYTKAWEEYYKKIGQQPQQPGAPPQQDYTKAWEEYYKKQAQVATGGGPGAPPGSQPDYSAAWAEYYRQQAAYYGQTPGPGGPQPPPTQQGQQQAQ</sequence>
<comment type="function">
    <text evidence="1 5 9 10">Binds to the dendritic targeting element and may play a role in mRNA trafficking (By similarity). Part of a ternary complex that binds to the downstream control sequence (DCS) of the pre-mRNA. Mediates exon inclusion in transcripts that are subject to tissue-specific alternative splicing. May interact with single-stranded DNA from the far-upstream element (FUSE). May activate gene expression. Also involved in degradation of inherently unstable mRNAs that contain AU-rich elements (AREs) in their 3'-UTR, possibly by recruiting degradation machinery to ARE-containing mRNAs.</text>
</comment>
<comment type="subunit">
    <text evidence="5 6 8">Part of a ternary complex containing FUBP2, PTBP1, PTBP2 and HNRPH1 (PubMed:11003644). Interacts with PARN (PubMed:15175153). Interacts with PQBP1 (PubMed:21933836).</text>
</comment>
<comment type="interaction">
    <interactant intactId="EBI-1049099">
        <id>Q92945</id>
    </interactant>
    <interactant intactId="EBI-15569571">
        <id>Q9UPY3-1</id>
        <label>DICER1</label>
    </interactant>
    <organismsDiffer>false</organismsDiffer>
    <experiments>3</experiments>
</comment>
<comment type="interaction">
    <interactant intactId="EBI-1049099">
        <id>Q92945</id>
    </interactant>
    <interactant intactId="EBI-354751">
        <id>P63101</id>
        <label>Ywhaz</label>
    </interactant>
    <organismsDiffer>true</organismsDiffer>
    <experiments>2</experiments>
</comment>
<comment type="subcellular location">
    <subcellularLocation>
        <location evidence="7">Nucleus</location>
    </subcellularLocation>
    <subcellularLocation>
        <location evidence="7">Cytoplasm</location>
    </subcellularLocation>
    <text evidence="1">A small proportion is also found in the cytoplasm of neuronal cell bodies and dendrites.</text>
</comment>
<comment type="tissue specificity">
    <text>Detected in neural and non-neural cell lines.</text>
</comment>
<comment type="domain">
    <text>KH domains KH 3 and KH 4 behave as independent binding modules and can interact with different regions of the AU-rich RNA targets of degradation.</text>
</comment>
<comment type="PTM">
    <text evidence="7">Phosphorylation at Ser-193 leads to the unfolding of the unstable KH domain 1, creating a site for 14-3-3 YWHAZ binding, which promotes nuclear localization and impairs the RNA degradation function.</text>
</comment>
<comment type="similarity">
    <text evidence="11">Belongs to the KHSRP family.</text>
</comment>
<comment type="sequence caution" evidence="11">
    <conflict type="frameshift">
        <sequence resource="EMBL-CDS" id="AAC50892"/>
    </conflict>
</comment>
<comment type="sequence caution" evidence="11">
    <conflict type="miscellaneous discrepancy">
        <sequence resource="EMBL-CDS" id="AAH85004"/>
    </conflict>
    <text>Aberrant splicing.</text>
</comment>
<organism>
    <name type="scientific">Homo sapiens</name>
    <name type="common">Human</name>
    <dbReference type="NCBI Taxonomy" id="9606"/>
    <lineage>
        <taxon>Eukaryota</taxon>
        <taxon>Metazoa</taxon>
        <taxon>Chordata</taxon>
        <taxon>Craniata</taxon>
        <taxon>Vertebrata</taxon>
        <taxon>Euteleostomi</taxon>
        <taxon>Mammalia</taxon>
        <taxon>Eutheria</taxon>
        <taxon>Euarchontoglires</taxon>
        <taxon>Primates</taxon>
        <taxon>Haplorrhini</taxon>
        <taxon>Catarrhini</taxon>
        <taxon>Hominidae</taxon>
        <taxon>Homo</taxon>
    </lineage>
</organism>
<keyword id="KW-0002">3D-structure</keyword>
<keyword id="KW-0007">Acetylation</keyword>
<keyword id="KW-0963">Cytoplasm</keyword>
<keyword id="KW-0903">Direct protein sequencing</keyword>
<keyword id="KW-0238">DNA-binding</keyword>
<keyword id="KW-1017">Isopeptide bond</keyword>
<keyword id="KW-0488">Methylation</keyword>
<keyword id="KW-0507">mRNA processing</keyword>
<keyword id="KW-0508">mRNA splicing</keyword>
<keyword id="KW-0509">mRNA transport</keyword>
<keyword id="KW-0539">Nucleus</keyword>
<keyword id="KW-0597">Phosphoprotein</keyword>
<keyword id="KW-1267">Proteomics identification</keyword>
<keyword id="KW-1185">Reference proteome</keyword>
<keyword id="KW-0677">Repeat</keyword>
<keyword id="KW-0694">RNA-binding</keyword>
<keyword id="KW-0804">Transcription</keyword>
<keyword id="KW-0805">Transcription regulation</keyword>
<keyword id="KW-0813">Transport</keyword>
<keyword id="KW-0832">Ubl conjugation</keyword>
<proteinExistence type="evidence at protein level"/>
<gene>
    <name type="primary">KHSRP</name>
    <name type="synonym">FUBP2</name>
</gene>
<accession>Q92945</accession>
<accession>O00301</accession>
<accession>Q59EZ9</accession>
<accession>Q5U4P6</accession>
<accession>Q9UNT5</accession>
<accession>Q9UQH5</accession>
<evidence type="ECO:0000250" key="1"/>
<evidence type="ECO:0000250" key="2">
    <source>
        <dbReference type="UniProtKB" id="Q3U0V1"/>
    </source>
</evidence>
<evidence type="ECO:0000255" key="3">
    <source>
        <dbReference type="PROSITE-ProRule" id="PRU00117"/>
    </source>
</evidence>
<evidence type="ECO:0000256" key="4">
    <source>
        <dbReference type="SAM" id="MobiDB-lite"/>
    </source>
</evidence>
<evidence type="ECO:0000269" key="5">
    <source>
    </source>
</evidence>
<evidence type="ECO:0000269" key="6">
    <source>
    </source>
</evidence>
<evidence type="ECO:0000269" key="7">
    <source>
    </source>
</evidence>
<evidence type="ECO:0000269" key="8">
    <source>
    </source>
</evidence>
<evidence type="ECO:0000269" key="9">
    <source>
    </source>
</evidence>
<evidence type="ECO:0000269" key="10">
    <source>
    </source>
</evidence>
<evidence type="ECO:0000305" key="11"/>
<evidence type="ECO:0007744" key="12">
    <source>
    </source>
</evidence>
<evidence type="ECO:0007744" key="13">
    <source>
    </source>
</evidence>
<evidence type="ECO:0007744" key="14">
    <source>
    </source>
</evidence>
<evidence type="ECO:0007744" key="15">
    <source>
    </source>
</evidence>
<evidence type="ECO:0007744" key="16">
    <source>
    </source>
</evidence>
<evidence type="ECO:0007744" key="17">
    <source>
    </source>
</evidence>
<evidence type="ECO:0007744" key="18">
    <source>
    </source>
</evidence>
<evidence type="ECO:0007744" key="19">
    <source>
    </source>
</evidence>
<evidence type="ECO:0007744" key="20">
    <source>
    </source>
</evidence>
<evidence type="ECO:0007744" key="21">
    <source>
    </source>
</evidence>
<evidence type="ECO:0007744" key="22">
    <source>
    </source>
</evidence>
<evidence type="ECO:0007744" key="23">
    <source>
    </source>
</evidence>
<evidence type="ECO:0007744" key="24">
    <source>
    </source>
</evidence>
<evidence type="ECO:0007744" key="25">
    <source>
    </source>
</evidence>
<evidence type="ECO:0007744" key="26">
    <source>
    </source>
</evidence>
<evidence type="ECO:0007829" key="27">
    <source>
        <dbReference type="PDB" id="2HH2"/>
    </source>
</evidence>
<evidence type="ECO:0007829" key="28">
    <source>
        <dbReference type="PDB" id="2HH3"/>
    </source>
</evidence>
<evidence type="ECO:0007829" key="29">
    <source>
        <dbReference type="PDB" id="2JVZ"/>
    </source>
</evidence>
<evidence type="ECO:0007829" key="30">
    <source>
        <dbReference type="PDB" id="2OPU"/>
    </source>
</evidence>
<evidence type="ECO:0007829" key="31">
    <source>
        <dbReference type="PDB" id="2OPV"/>
    </source>
</evidence>
<evidence type="ECO:0007829" key="32">
    <source>
        <dbReference type="PDB" id="4B8T"/>
    </source>
</evidence>
<reference key="1">
    <citation type="journal article" date="1997" name="Genes Dev.">
        <title>A new regulatory protein, KSRP, mediates exon inclusion through an intronic splicing enhancer.</title>
        <authorList>
            <person name="Min H."/>
            <person name="Turck C.W."/>
            <person name="Nikolic J.M."/>
            <person name="Black D.L."/>
        </authorList>
    </citation>
    <scope>NUCLEOTIDE SEQUENCE [MRNA]</scope>
    <scope>PROTEIN SEQUENCE OF 72-85; 123-128; 267-281; 283-291; 348-359; 474-488; 489-494; 621-627; 629-646 AND 647-653</scope>
    <scope>FUNCTION</scope>
    <source>
        <tissue>Neuroblastoma</tissue>
        <tissue>Retinoblastoma</tissue>
    </source>
</reference>
<reference key="2">
    <citation type="journal article" date="2004" name="Nature">
        <title>The DNA sequence and biology of human chromosome 19.</title>
        <authorList>
            <person name="Grimwood J."/>
            <person name="Gordon L.A."/>
            <person name="Olsen A.S."/>
            <person name="Terry A."/>
            <person name="Schmutz J."/>
            <person name="Lamerdin J.E."/>
            <person name="Hellsten U."/>
            <person name="Goodstein D."/>
            <person name="Couronne O."/>
            <person name="Tran-Gyamfi M."/>
            <person name="Aerts A."/>
            <person name="Altherr M."/>
            <person name="Ashworth L."/>
            <person name="Bajorek E."/>
            <person name="Black S."/>
            <person name="Branscomb E."/>
            <person name="Caenepeel S."/>
            <person name="Carrano A.V."/>
            <person name="Caoile C."/>
            <person name="Chan Y.M."/>
            <person name="Christensen M."/>
            <person name="Cleland C.A."/>
            <person name="Copeland A."/>
            <person name="Dalin E."/>
            <person name="Dehal P."/>
            <person name="Denys M."/>
            <person name="Detter J.C."/>
            <person name="Escobar J."/>
            <person name="Flowers D."/>
            <person name="Fotopulos D."/>
            <person name="Garcia C."/>
            <person name="Georgescu A.M."/>
            <person name="Glavina T."/>
            <person name="Gomez M."/>
            <person name="Gonzales E."/>
            <person name="Groza M."/>
            <person name="Hammon N."/>
            <person name="Hawkins T."/>
            <person name="Haydu L."/>
            <person name="Ho I."/>
            <person name="Huang W."/>
            <person name="Israni S."/>
            <person name="Jett J."/>
            <person name="Kadner K."/>
            <person name="Kimball H."/>
            <person name="Kobayashi A."/>
            <person name="Larionov V."/>
            <person name="Leem S.-H."/>
            <person name="Lopez F."/>
            <person name="Lou Y."/>
            <person name="Lowry S."/>
            <person name="Malfatti S."/>
            <person name="Martinez D."/>
            <person name="McCready P.M."/>
            <person name="Medina C."/>
            <person name="Morgan J."/>
            <person name="Nelson K."/>
            <person name="Nolan M."/>
            <person name="Ovcharenko I."/>
            <person name="Pitluck S."/>
            <person name="Pollard M."/>
            <person name="Popkie A.P."/>
            <person name="Predki P."/>
            <person name="Quan G."/>
            <person name="Ramirez L."/>
            <person name="Rash S."/>
            <person name="Retterer J."/>
            <person name="Rodriguez A."/>
            <person name="Rogers S."/>
            <person name="Salamov A."/>
            <person name="Salazar A."/>
            <person name="She X."/>
            <person name="Smith D."/>
            <person name="Slezak T."/>
            <person name="Solovyev V."/>
            <person name="Thayer N."/>
            <person name="Tice H."/>
            <person name="Tsai M."/>
            <person name="Ustaszewska A."/>
            <person name="Vo N."/>
            <person name="Wagner M."/>
            <person name="Wheeler J."/>
            <person name="Wu K."/>
            <person name="Xie G."/>
            <person name="Yang J."/>
            <person name="Dubchak I."/>
            <person name="Furey T.S."/>
            <person name="DeJong P."/>
            <person name="Dickson M."/>
            <person name="Gordon D."/>
            <person name="Eichler E.E."/>
            <person name="Pennacchio L.A."/>
            <person name="Richardson P."/>
            <person name="Stubbs L."/>
            <person name="Rokhsar D.S."/>
            <person name="Myers R.M."/>
            <person name="Rubin E.M."/>
            <person name="Lucas S.M."/>
        </authorList>
    </citation>
    <scope>NUCLEOTIDE SEQUENCE [LARGE SCALE GENOMIC DNA]</scope>
</reference>
<reference key="3">
    <citation type="journal article" date="2004" name="Genome Res.">
        <title>The status, quality, and expansion of the NIH full-length cDNA project: the Mammalian Gene Collection (MGC).</title>
        <authorList>
            <consortium name="The MGC Project Team"/>
        </authorList>
    </citation>
    <scope>NUCLEOTIDE SEQUENCE [LARGE SCALE MRNA]</scope>
    <source>
        <tissue>Ovary</tissue>
    </source>
</reference>
<reference key="4">
    <citation type="journal article" date="1999" name="Genomics">
        <title>Mapping of the KHSRP gene to a region of conserved synteny on human chromosome 19p13.3 and mouse chromosome 17.</title>
        <authorList>
            <person name="Ring H.Z."/>
            <person name="Vameghi-Meyers V."/>
            <person name="Nikolic J.M."/>
            <person name="Min H."/>
            <person name="Black D.L."/>
            <person name="Francke U."/>
        </authorList>
    </citation>
    <scope>NUCLEOTIDE SEQUENCE [GENOMIC DNA] OF 1-115 AND 573-711</scope>
</reference>
<reference key="5">
    <citation type="journal article" date="1996" name="J. Biol. Chem.">
        <title>The far upstream element-binding proteins comprise an ancient family of single-strand DNA-binding transactivators.</title>
        <authorList>
            <person name="Davis-Smyth T."/>
            <person name="Duncan R.C."/>
            <person name="Zheng T."/>
            <person name="Michelotti G."/>
            <person name="Levens D."/>
        </authorList>
    </citation>
    <scope>NUCLEOTIDE SEQUENCE [MRNA] OF 60-711</scope>
    <scope>FUNCTION</scope>
    <source>
        <tissue>B-cell lymphoma</tissue>
        <tissue>Skeletal muscle</tissue>
    </source>
</reference>
<reference key="6">
    <citation type="submission" date="2008-12" db="UniProtKB">
        <authorList>
            <person name="Lubec G."/>
            <person name="Chen W.-Q."/>
            <person name="Sun Y."/>
        </authorList>
    </citation>
    <scope>PROTEIN SEQUENCE OF 151-162; 321-331 AND 385-394</scope>
    <scope>IDENTIFICATION BY MASS SPECTROMETRY</scope>
    <source>
        <tissue>Fetal brain cortex</tissue>
    </source>
</reference>
<reference key="7">
    <citation type="submission" date="2005-03" db="EMBL/GenBank/DDBJ databases">
        <authorList>
            <person name="Totoki Y."/>
            <person name="Toyoda A."/>
            <person name="Takeda T."/>
            <person name="Sakaki Y."/>
            <person name="Tanaka A."/>
            <person name="Yokoyama S."/>
            <person name="Ohara O."/>
            <person name="Nagase T."/>
            <person name="Kikuno R.F."/>
        </authorList>
    </citation>
    <scope>NUCLEOTIDE SEQUENCE [LARGE SCALE MRNA] OF 183-566</scope>
    <source>
        <tissue>Brain</tissue>
    </source>
</reference>
<reference key="8">
    <citation type="journal article" date="2000" name="Mol. Cell. Biol.">
        <title>Cooperative assembly of an hnRNP complex induced by a tissue-specific homolog of polypyrimidine tract binding protein.</title>
        <authorList>
            <person name="Markovtsov V."/>
            <person name="Nikolic J.M."/>
            <person name="Goldman J.A."/>
            <person name="Turck C.W."/>
            <person name="Chou M.-Y."/>
            <person name="Black D.L."/>
        </authorList>
    </citation>
    <scope>FUNCTION</scope>
    <scope>INTERACTION WITH PTBP1; PTBP2 AND HNRPH1</scope>
</reference>
<reference key="9">
    <citation type="journal article" date="2004" name="Mol. Cell">
        <title>A KH domain RNA binding protein, KSRP, promotes ARE-directed mRNA turnover by recruiting the degradation machinery.</title>
        <authorList>
            <person name="Gherzi R."/>
            <person name="Lee K.-Y."/>
            <person name="Briata P."/>
            <person name="Wegmueller D."/>
            <person name="Moroni C."/>
            <person name="Karin M."/>
            <person name="Chen C.-Y."/>
        </authorList>
    </citation>
    <scope>INTERACTION WITH PARN</scope>
</reference>
<reference key="10">
    <citation type="journal article" date="2006" name="Cell">
        <title>Global, in vivo, and site-specific phosphorylation dynamics in signaling networks.</title>
        <authorList>
            <person name="Olsen J.V."/>
            <person name="Blagoev B."/>
            <person name="Gnad F."/>
            <person name="Macek B."/>
            <person name="Kumar C."/>
            <person name="Mortensen P."/>
            <person name="Mann M."/>
        </authorList>
    </citation>
    <scope>PHOSPHORYLATION [LARGE SCALE ANALYSIS] AT SER-480</scope>
    <scope>IDENTIFICATION BY MASS SPECTROMETRY [LARGE SCALE ANALYSIS]</scope>
    <source>
        <tissue>Cervix carcinoma</tissue>
    </source>
</reference>
<reference key="11">
    <citation type="journal article" date="2006" name="Nat. Biotechnol.">
        <title>A probability-based approach for high-throughput protein phosphorylation analysis and site localization.</title>
        <authorList>
            <person name="Beausoleil S.A."/>
            <person name="Villen J."/>
            <person name="Gerber S.A."/>
            <person name="Rush J."/>
            <person name="Gygi S.P."/>
        </authorList>
    </citation>
    <scope>PHOSPHORYLATION [LARGE SCALE ANALYSIS] AT SER-181</scope>
    <scope>IDENTIFICATION BY MASS SPECTROMETRY [LARGE SCALE ANALYSIS]</scope>
    <source>
        <tissue>Cervix carcinoma</tissue>
    </source>
</reference>
<reference key="12">
    <citation type="journal article" date="2007" name="Science">
        <title>ATM and ATR substrate analysis reveals extensive protein networks responsive to DNA damage.</title>
        <authorList>
            <person name="Matsuoka S."/>
            <person name="Ballif B.A."/>
            <person name="Smogorzewska A."/>
            <person name="McDonald E.R. III"/>
            <person name="Hurov K.E."/>
            <person name="Luo J."/>
            <person name="Bakalarski C.E."/>
            <person name="Zhao Z."/>
            <person name="Solimini N."/>
            <person name="Lerenthal Y."/>
            <person name="Shiloh Y."/>
            <person name="Gygi S.P."/>
            <person name="Elledge S.J."/>
        </authorList>
    </citation>
    <scope>IDENTIFICATION BY MASS SPECTROMETRY [LARGE SCALE ANALYSIS]</scope>
    <source>
        <tissue>Embryonic kidney</tissue>
    </source>
</reference>
<reference key="13">
    <citation type="journal article" date="2008" name="Mol. Cell">
        <title>Kinase-selective enrichment enables quantitative phosphoproteomics of the kinome across the cell cycle.</title>
        <authorList>
            <person name="Daub H."/>
            <person name="Olsen J.V."/>
            <person name="Bairlein M."/>
            <person name="Gnad F."/>
            <person name="Oppermann F.S."/>
            <person name="Korner R."/>
            <person name="Greff Z."/>
            <person name="Keri G."/>
            <person name="Stemmann O."/>
            <person name="Mann M."/>
        </authorList>
    </citation>
    <scope>PHOSPHORYLATION [LARGE SCALE ANALYSIS] AT SER-181</scope>
    <scope>IDENTIFICATION BY MASS SPECTROMETRY [LARGE SCALE ANALYSIS]</scope>
    <source>
        <tissue>Cervix carcinoma</tissue>
    </source>
</reference>
<reference key="14">
    <citation type="journal article" date="2008" name="Proc. Natl. Acad. Sci. U.S.A.">
        <title>A quantitative atlas of mitotic phosphorylation.</title>
        <authorList>
            <person name="Dephoure N."/>
            <person name="Zhou C."/>
            <person name="Villen J."/>
            <person name="Beausoleil S.A."/>
            <person name="Bakalarski C.E."/>
            <person name="Elledge S.J."/>
            <person name="Gygi S.P."/>
        </authorList>
    </citation>
    <scope>PHOSPHORYLATION [LARGE SCALE ANALYSIS] AT THR-100; SER-181 AND SER-274</scope>
    <scope>IDENTIFICATION BY MASS SPECTROMETRY [LARGE SCALE ANALYSIS]</scope>
    <source>
        <tissue>Cervix carcinoma</tissue>
    </source>
</reference>
<reference key="15">
    <citation type="journal article" date="2009" name="Anal. Chem.">
        <title>Lys-N and trypsin cover complementary parts of the phosphoproteome in a refined SCX-based approach.</title>
        <authorList>
            <person name="Gauci S."/>
            <person name="Helbig A.O."/>
            <person name="Slijper M."/>
            <person name="Krijgsveld J."/>
            <person name="Heck A.J."/>
            <person name="Mohammed S."/>
        </authorList>
    </citation>
    <scope>ACETYLATION [LARGE SCALE ANALYSIS] AT SER-2</scope>
    <scope>CLEAVAGE OF INITIATOR METHIONINE [LARGE SCALE ANALYSIS]</scope>
    <scope>IDENTIFICATION BY MASS SPECTROMETRY [LARGE SCALE ANALYSIS]</scope>
</reference>
<reference key="16">
    <citation type="journal article" date="2009" name="Mol. Cell. Proteomics">
        <title>Large-scale proteomics analysis of the human kinome.</title>
        <authorList>
            <person name="Oppermann F.S."/>
            <person name="Gnad F."/>
            <person name="Olsen J.V."/>
            <person name="Hornberger R."/>
            <person name="Greff Z."/>
            <person name="Keri G."/>
            <person name="Mann M."/>
            <person name="Daub H."/>
        </authorList>
    </citation>
    <scope>PHOSPHORYLATION [LARGE SCALE ANALYSIS] AT SER-181</scope>
    <scope>IDENTIFICATION BY MASS SPECTROMETRY [LARGE SCALE ANALYSIS]</scope>
</reference>
<reference key="17">
    <citation type="journal article" date="2009" name="Sci. Signal.">
        <title>Quantitative phosphoproteomic analysis of T cell receptor signaling reveals system-wide modulation of protein-protein interactions.</title>
        <authorList>
            <person name="Mayya V."/>
            <person name="Lundgren D.H."/>
            <person name="Hwang S.-I."/>
            <person name="Rezaul K."/>
            <person name="Wu L."/>
            <person name="Eng J.K."/>
            <person name="Rodionov V."/>
            <person name="Han D.K."/>
        </authorList>
    </citation>
    <scope>PHOSPHORYLATION [LARGE SCALE ANALYSIS] AT SER-181</scope>
    <scope>IDENTIFICATION BY MASS SPECTROMETRY [LARGE SCALE ANALYSIS]</scope>
    <source>
        <tissue>Leukemic T-cell</tissue>
    </source>
</reference>
<reference key="18">
    <citation type="journal article" date="2010" name="Sci. Signal.">
        <title>Quantitative phosphoproteomics reveals widespread full phosphorylation site occupancy during mitosis.</title>
        <authorList>
            <person name="Olsen J.V."/>
            <person name="Vermeulen M."/>
            <person name="Santamaria A."/>
            <person name="Kumar C."/>
            <person name="Miller M.L."/>
            <person name="Jensen L.J."/>
            <person name="Gnad F."/>
            <person name="Cox J."/>
            <person name="Jensen T.S."/>
            <person name="Nigg E.A."/>
            <person name="Brunak S."/>
            <person name="Mann M."/>
        </authorList>
    </citation>
    <scope>PHOSPHORYLATION [LARGE SCALE ANALYSIS] AT SER-181 AND SER-480</scope>
    <scope>IDENTIFICATION BY MASS SPECTROMETRY [LARGE SCALE ANALYSIS]</scope>
    <source>
        <tissue>Cervix carcinoma</tissue>
    </source>
</reference>
<reference key="19">
    <citation type="journal article" date="2011" name="BMC Syst. Biol.">
        <title>Initial characterization of the human central proteome.</title>
        <authorList>
            <person name="Burkard T.R."/>
            <person name="Planyavsky M."/>
            <person name="Kaupe I."/>
            <person name="Breitwieser F.P."/>
            <person name="Buerckstuemmer T."/>
            <person name="Bennett K.L."/>
            <person name="Superti-Furga G."/>
            <person name="Colinge J."/>
        </authorList>
    </citation>
    <scope>IDENTIFICATION BY MASS SPECTROMETRY [LARGE SCALE ANALYSIS]</scope>
</reference>
<reference key="20">
    <citation type="journal article" date="2011" name="Hum. Mol. Genet.">
        <title>The X-chromosome-linked intellectual disability protein PQBP1 is a component of neuronal RNA granules and regulates the appearance of stress granules.</title>
        <authorList>
            <person name="Kunde S.A."/>
            <person name="Musante L."/>
            <person name="Grimme A."/>
            <person name="Fischer U."/>
            <person name="Mueller E."/>
            <person name="Wanker E.E."/>
            <person name="Kalscheuer V.M."/>
        </authorList>
    </citation>
    <scope>INTERACTION WITH PQBP1</scope>
</reference>
<reference key="21">
    <citation type="journal article" date="2011" name="Sci. Signal.">
        <title>System-wide temporal characterization of the proteome and phosphoproteome of human embryonic stem cell differentiation.</title>
        <authorList>
            <person name="Rigbolt K.T."/>
            <person name="Prokhorova T.A."/>
            <person name="Akimov V."/>
            <person name="Henningsen J."/>
            <person name="Johansen P.T."/>
            <person name="Kratchmarova I."/>
            <person name="Kassem M."/>
            <person name="Mann M."/>
            <person name="Olsen J.V."/>
            <person name="Blagoev B."/>
        </authorList>
    </citation>
    <scope>PHOSPHORYLATION [LARGE SCALE ANALYSIS] AT SER-181; SER-274 AND SER-480</scope>
    <scope>IDENTIFICATION BY MASS SPECTROMETRY [LARGE SCALE ANALYSIS]</scope>
</reference>
<reference key="22">
    <citation type="journal article" date="2012" name="Mol. Cell. Proteomics">
        <title>Comparative large-scale characterisation of plant vs. mammal proteins reveals similar and idiosyncratic N-alpha acetylation features.</title>
        <authorList>
            <person name="Bienvenut W.V."/>
            <person name="Sumpton D."/>
            <person name="Martinez A."/>
            <person name="Lilla S."/>
            <person name="Espagne C."/>
            <person name="Meinnel T."/>
            <person name="Giglione C."/>
        </authorList>
    </citation>
    <scope>ACETYLATION [LARGE SCALE ANALYSIS] AT SER-2</scope>
    <scope>CLEAVAGE OF INITIATOR METHIONINE [LARGE SCALE ANALYSIS]</scope>
    <scope>IDENTIFICATION BY MASS SPECTROMETRY [LARGE SCALE ANALYSIS]</scope>
</reference>
<reference key="23">
    <citation type="journal article" date="2012" name="Proc. Natl. Acad. Sci. U.S.A.">
        <title>N-terminal acetylome analyses and functional insights of the N-terminal acetyltransferase NatB.</title>
        <authorList>
            <person name="Van Damme P."/>
            <person name="Lasa M."/>
            <person name="Polevoda B."/>
            <person name="Gazquez C."/>
            <person name="Elosegui-Artola A."/>
            <person name="Kim D.S."/>
            <person name="De Juan-Pardo E."/>
            <person name="Demeyer K."/>
            <person name="Hole K."/>
            <person name="Larrea E."/>
            <person name="Timmerman E."/>
            <person name="Prieto J."/>
            <person name="Arnesen T."/>
            <person name="Sherman F."/>
            <person name="Gevaert K."/>
            <person name="Aldabe R."/>
        </authorList>
    </citation>
    <scope>ACETYLATION [LARGE SCALE ANALYSIS] AT SER-2</scope>
    <scope>CLEAVAGE OF INITIATOR METHIONINE [LARGE SCALE ANALYSIS]</scope>
    <scope>IDENTIFICATION BY MASS SPECTROMETRY [LARGE SCALE ANALYSIS]</scope>
</reference>
<reference key="24">
    <citation type="journal article" date="2013" name="J. Proteome Res.">
        <title>Toward a comprehensive characterization of a human cancer cell phosphoproteome.</title>
        <authorList>
            <person name="Zhou H."/>
            <person name="Di Palma S."/>
            <person name="Preisinger C."/>
            <person name="Peng M."/>
            <person name="Polat A.N."/>
            <person name="Heck A.J."/>
            <person name="Mohammed S."/>
        </authorList>
    </citation>
    <scope>PHOSPHORYLATION [LARGE SCALE ANALYSIS] AT SER-99; SER-125; SER-129; SER-131; SER-181; SER-184; SER-193; SER-274 AND SER-480</scope>
    <scope>IDENTIFICATION BY MASS SPECTROMETRY [LARGE SCALE ANALYSIS]</scope>
    <source>
        <tissue>Cervix carcinoma</tissue>
        <tissue>Erythroleukemia</tissue>
    </source>
</reference>
<reference key="25">
    <citation type="journal article" date="2014" name="J. Proteomics">
        <title>An enzyme assisted RP-RPLC approach for in-depth analysis of human liver phosphoproteome.</title>
        <authorList>
            <person name="Bian Y."/>
            <person name="Song C."/>
            <person name="Cheng K."/>
            <person name="Dong M."/>
            <person name="Wang F."/>
            <person name="Huang J."/>
            <person name="Sun D."/>
            <person name="Wang L."/>
            <person name="Ye M."/>
            <person name="Zou H."/>
        </authorList>
    </citation>
    <scope>IDENTIFICATION BY MASS SPECTROMETRY [LARGE SCALE ANALYSIS]</scope>
    <source>
        <tissue>Liver</tissue>
    </source>
</reference>
<reference key="26">
    <citation type="journal article" date="2014" name="Mol. Cell. Proteomics">
        <title>Immunoaffinity enrichment and mass spectrometry analysis of protein methylation.</title>
        <authorList>
            <person name="Guo A."/>
            <person name="Gu H."/>
            <person name="Zhou J."/>
            <person name="Mulhern D."/>
            <person name="Wang Y."/>
            <person name="Lee K.A."/>
            <person name="Yang V."/>
            <person name="Aguiar M."/>
            <person name="Kornhauser J."/>
            <person name="Jia X."/>
            <person name="Ren J."/>
            <person name="Beausoleil S.A."/>
            <person name="Silva J.C."/>
            <person name="Vemulapalli V."/>
            <person name="Bedford M.T."/>
            <person name="Comb M.J."/>
        </authorList>
    </citation>
    <scope>METHYLATION [LARGE SCALE ANALYSIS] AT ARG-411; ARG-413; ARG-415 AND ARG-442</scope>
    <scope>IDENTIFICATION BY MASS SPECTROMETRY [LARGE SCALE ANALYSIS]</scope>
    <source>
        <tissue>Colon carcinoma</tissue>
    </source>
</reference>
<reference key="27">
    <citation type="journal article" date="2014" name="Proc. Natl. Acad. Sci. U.S.A.">
        <title>Mapping of SUMO sites and analysis of SUMOylation changes induced by external stimuli.</title>
        <authorList>
            <person name="Impens F."/>
            <person name="Radoshevich L."/>
            <person name="Cossart P."/>
            <person name="Ribet D."/>
        </authorList>
    </citation>
    <scope>SUMOYLATION [LARGE SCALE ANALYSIS] AT LYS-121</scope>
    <scope>IDENTIFICATION BY MASS SPECTROMETRY [LARGE SCALE ANALYSIS]</scope>
</reference>
<reference key="28">
    <citation type="journal article" date="2015" name="Proteomics">
        <title>N-terminome analysis of the human mitochondrial proteome.</title>
        <authorList>
            <person name="Vaca Jacome A.S."/>
            <person name="Rabilloud T."/>
            <person name="Schaeffer-Reiss C."/>
            <person name="Rompais M."/>
            <person name="Ayoub D."/>
            <person name="Lane L."/>
            <person name="Bairoch A."/>
            <person name="Van Dorsselaer A."/>
            <person name="Carapito C."/>
        </authorList>
    </citation>
    <scope>IDENTIFICATION BY MASS SPECTROMETRY [LARGE SCALE ANALYSIS]</scope>
</reference>
<reference key="29">
    <citation type="journal article" date="2017" name="Nat. Struct. Mol. Biol.">
        <title>Site-specific mapping of the human SUMO proteome reveals co-modification with phosphorylation.</title>
        <authorList>
            <person name="Hendriks I.A."/>
            <person name="Lyon D."/>
            <person name="Young C."/>
            <person name="Jensen L.J."/>
            <person name="Vertegaal A.C."/>
            <person name="Nielsen M.L."/>
        </authorList>
    </citation>
    <scope>SUMOYLATION [LARGE SCALE ANALYSIS] AT LYS-121</scope>
    <scope>IDENTIFICATION BY MASS SPECTROMETRY [LARGE SCALE ANALYSIS]</scope>
</reference>
<reference key="30">
    <citation type="journal article" date="2007" name="Structure">
        <title>The structure of the C-terminal KH domains of KSRP reveals a noncanonical motif important for mRNA degradation.</title>
        <authorList>
            <person name="Garcia-Mayoral M.F."/>
            <person name="Hollingworth D."/>
            <person name="Masino L."/>
            <person name="Diaz-Moreno I."/>
            <person name="Kelly G."/>
            <person name="Gherzi R."/>
            <person name="Chou C.F."/>
            <person name="Chen C.Y."/>
            <person name="Ramos A."/>
        </authorList>
    </citation>
    <scope>STRUCTURE BY NMR OF 218-418 AND 423-525</scope>
</reference>
<reference key="31">
    <citation type="journal article" date="2009" name="Nat. Struct. Mol. Biol.">
        <title>Phosphorylation-mediated unfolding of a KH domain regulates KSRP localization via 14-3-3 binding.</title>
        <authorList>
            <person name="Diaz-Moreno I."/>
            <person name="Hollingworth D."/>
            <person name="Frenkiel T.A."/>
            <person name="Kelly G."/>
            <person name="Martin S."/>
            <person name="Howell S."/>
            <person name="Garcia-Mayoral M."/>
            <person name="Gherzi R."/>
            <person name="Briata P."/>
            <person name="Ramos A."/>
        </authorList>
    </citation>
    <scope>STRUCTURE BY NMR OF 130-218 AND 221-305</scope>
    <scope>PHOSPHORYLATION AT SER-193</scope>
    <scope>SUBCELLULAR LOCATION</scope>
</reference>
<name>FUBP2_HUMAN</name>
<feature type="initiator methionine" description="Removed" evidence="17 21 22">
    <location>
        <position position="1"/>
    </location>
</feature>
<feature type="chain" id="PRO_0000050137" description="Far upstream element-binding protein 2">
    <location>
        <begin position="2"/>
        <end position="711"/>
    </location>
</feature>
<feature type="domain" description="KH 1" evidence="3">
    <location>
        <begin position="144"/>
        <end position="208"/>
    </location>
</feature>
<feature type="domain" description="KH 2" evidence="3">
    <location>
        <begin position="233"/>
        <end position="299"/>
    </location>
</feature>
<feature type="domain" description="KH 3" evidence="3">
    <location>
        <begin position="322"/>
        <end position="386"/>
    </location>
</feature>
<feature type="domain" description="KH 4" evidence="3">
    <location>
        <begin position="424"/>
        <end position="491"/>
    </location>
</feature>
<feature type="repeat" description="1">
    <location>
        <begin position="571"/>
        <end position="582"/>
    </location>
</feature>
<feature type="repeat" description="2">
    <location>
        <begin position="617"/>
        <end position="628"/>
    </location>
</feature>
<feature type="repeat" description="3">
    <location>
        <begin position="643"/>
        <end position="654"/>
    </location>
</feature>
<feature type="repeat" description="4">
    <location>
        <begin position="673"/>
        <end position="684"/>
    </location>
</feature>
<feature type="region of interest" description="Disordered" evidence="4">
    <location>
        <begin position="1"/>
        <end position="147"/>
    </location>
</feature>
<feature type="region of interest" description="Disordered" evidence="4">
    <location>
        <begin position="392"/>
        <end position="429"/>
    </location>
</feature>
<feature type="region of interest" description="Disordered" evidence="4">
    <location>
        <begin position="497"/>
        <end position="569"/>
    </location>
</feature>
<feature type="region of interest" description="4 X 12 AA imperfect repeats">
    <location>
        <begin position="571"/>
        <end position="684"/>
    </location>
</feature>
<feature type="region of interest" description="Disordered" evidence="4">
    <location>
        <begin position="583"/>
        <end position="711"/>
    </location>
</feature>
<feature type="compositionally biased region" description="Pro residues" evidence="4">
    <location>
        <begin position="8"/>
        <end position="17"/>
    </location>
</feature>
<feature type="compositionally biased region" description="Gly residues" evidence="4">
    <location>
        <begin position="18"/>
        <end position="28"/>
    </location>
</feature>
<feature type="compositionally biased region" description="Gly residues" evidence="4">
    <location>
        <begin position="36"/>
        <end position="68"/>
    </location>
</feature>
<feature type="compositionally biased region" description="Basic and acidic residues" evidence="4">
    <location>
        <begin position="110"/>
        <end position="122"/>
    </location>
</feature>
<feature type="compositionally biased region" description="Pro residues" evidence="4">
    <location>
        <begin position="397"/>
        <end position="407"/>
    </location>
</feature>
<feature type="compositionally biased region" description="Gly residues" evidence="4">
    <location>
        <begin position="408"/>
        <end position="424"/>
    </location>
</feature>
<feature type="compositionally biased region" description="Pro residues" evidence="4">
    <location>
        <begin position="501"/>
        <end position="520"/>
    </location>
</feature>
<feature type="compositionally biased region" description="Pro residues" evidence="4">
    <location>
        <begin position="528"/>
        <end position="542"/>
    </location>
</feature>
<feature type="compositionally biased region" description="Pro residues" evidence="4">
    <location>
        <begin position="587"/>
        <end position="613"/>
    </location>
</feature>
<feature type="modified residue" description="N-acetylserine" evidence="17 21 22">
    <location>
        <position position="2"/>
    </location>
</feature>
<feature type="modified residue" description="Omega-N-methylarginine" evidence="2">
    <location>
        <position position="40"/>
    </location>
</feature>
<feature type="modified residue" description="N6-acetyllysine" evidence="2">
    <location>
        <position position="87"/>
    </location>
</feature>
<feature type="modified residue" description="Phosphoserine" evidence="23">
    <location>
        <position position="99"/>
    </location>
</feature>
<feature type="modified residue" description="Phosphothreonine" evidence="14">
    <location>
        <position position="100"/>
    </location>
</feature>
<feature type="modified residue" description="Phosphoserine" evidence="23">
    <location>
        <position position="125"/>
    </location>
</feature>
<feature type="modified residue" description="Phosphoserine" evidence="23">
    <location>
        <position position="129"/>
    </location>
</feature>
<feature type="modified residue" description="Phosphoserine" evidence="23">
    <location>
        <position position="131"/>
    </location>
</feature>
<feature type="modified residue" description="Phosphoserine" evidence="12 14 15 16 18 19 20 23">
    <location>
        <position position="181"/>
    </location>
</feature>
<feature type="modified residue" description="Phosphoserine" evidence="23">
    <location>
        <position position="184"/>
    </location>
</feature>
<feature type="modified residue" description="Phosphoserine" evidence="7 23">
    <location>
        <position position="193"/>
    </location>
</feature>
<feature type="modified residue" description="Phosphoserine" evidence="14 20 23">
    <location>
        <position position="274"/>
    </location>
</feature>
<feature type="modified residue" description="Omega-N-methylarginine" evidence="24">
    <location>
        <position position="411"/>
    </location>
</feature>
<feature type="modified residue" description="Omega-N-methylarginine" evidence="24">
    <location>
        <position position="413"/>
    </location>
</feature>
<feature type="modified residue" description="Omega-N-methylarginine" evidence="24">
    <location>
        <position position="415"/>
    </location>
</feature>
<feature type="modified residue" description="Omega-N-methylarginine" evidence="24">
    <location>
        <position position="442"/>
    </location>
</feature>
<feature type="modified residue" description="Phosphoserine" evidence="13 19 20 23">
    <location>
        <position position="480"/>
    </location>
</feature>
<feature type="cross-link" description="Glycyl lysine isopeptide (Lys-Gly) (interchain with G-Cter in SUMO1); alternate" evidence="25">
    <location>
        <position position="121"/>
    </location>
</feature>
<feature type="cross-link" description="Glycyl lysine isopeptide (Lys-Gly) (interchain with G-Cter in SUMO2); alternate" evidence="26">
    <location>
        <position position="121"/>
    </location>
</feature>
<feature type="sequence conflict" description="In Ref. 1; AAB53222 and 4; AAD29861." evidence="11" ref="1 4">
    <original>G</original>
    <variation>C</variation>
    <location>
        <position position="46"/>
    </location>
</feature>
<feature type="sequence conflict" description="In Ref. 5; AAC50892." evidence="11" ref="5">
    <original>V</original>
    <variation>G</variation>
    <location>
        <position position="96"/>
    </location>
</feature>
<feature type="sequence conflict" description="In Ref. 5; AAC50892." evidence="11" ref="5">
    <original>MP</original>
    <variation>I</variation>
    <location>
        <begin position="406"/>
        <end position="407"/>
    </location>
</feature>
<feature type="sequence conflict" description="In Ref. 5; AAC50892." evidence="11" ref="5">
    <location>
        <position position="422"/>
    </location>
</feature>
<feature type="sequence conflict" description="In Ref. 5; AAC50892." evidence="11" ref="5">
    <original>AK</original>
    <variation>CR</variation>
    <location>
        <begin position="487"/>
        <end position="488"/>
    </location>
</feature>
<feature type="sequence conflict" description="In Ref. 5; AAC50892." evidence="11" ref="5">
    <original>GPG</original>
    <variation>VP</variation>
    <location>
        <begin position="694"/>
        <end position="696"/>
    </location>
</feature>
<feature type="strand" evidence="30">
    <location>
        <begin position="132"/>
        <end position="134"/>
    </location>
</feature>
<feature type="helix" evidence="30">
    <location>
        <begin position="141"/>
        <end position="144"/>
    </location>
</feature>
<feature type="strand" evidence="30">
    <location>
        <begin position="146"/>
        <end position="151"/>
    </location>
</feature>
<feature type="helix" evidence="30">
    <location>
        <begin position="153"/>
        <end position="159"/>
    </location>
</feature>
<feature type="turn" evidence="30">
    <location>
        <begin position="161"/>
        <end position="163"/>
    </location>
</feature>
<feature type="helix" evidence="30">
    <location>
        <begin position="165"/>
        <end position="174"/>
    </location>
</feature>
<feature type="strand" evidence="30">
    <location>
        <begin position="179"/>
        <end position="183"/>
    </location>
</feature>
<feature type="strand" evidence="30">
    <location>
        <begin position="188"/>
        <end position="194"/>
    </location>
</feature>
<feature type="helix" evidence="30">
    <location>
        <begin position="198"/>
        <end position="216"/>
    </location>
</feature>
<feature type="strand" evidence="29">
    <location>
        <begin position="234"/>
        <end position="240"/>
    </location>
</feature>
<feature type="turn" evidence="31">
    <location>
        <begin position="242"/>
        <end position="244"/>
    </location>
</feature>
<feature type="turn" evidence="29">
    <location>
        <begin position="245"/>
        <end position="249"/>
    </location>
</feature>
<feature type="turn" evidence="29">
    <location>
        <begin position="251"/>
        <end position="253"/>
    </location>
</feature>
<feature type="helix" evidence="29">
    <location>
        <begin position="254"/>
        <end position="261"/>
    </location>
</feature>
<feature type="strand" evidence="29">
    <location>
        <begin position="265"/>
        <end position="269"/>
    </location>
</feature>
<feature type="strand" evidence="31">
    <location>
        <begin position="271"/>
        <end position="273"/>
    </location>
</feature>
<feature type="strand" evidence="29">
    <location>
        <begin position="275"/>
        <end position="279"/>
    </location>
</feature>
<feature type="strand" evidence="29">
    <location>
        <begin position="281"/>
        <end position="287"/>
    </location>
</feature>
<feature type="helix" evidence="29">
    <location>
        <begin position="289"/>
        <end position="302"/>
    </location>
</feature>
<feature type="strand" evidence="29">
    <location>
        <begin position="306"/>
        <end position="308"/>
    </location>
</feature>
<feature type="turn" evidence="32">
    <location>
        <begin position="317"/>
        <end position="319"/>
    </location>
</feature>
<feature type="strand" evidence="28">
    <location>
        <begin position="325"/>
        <end position="330"/>
    </location>
</feature>
<feature type="turn" evidence="28">
    <location>
        <begin position="331"/>
        <end position="333"/>
    </location>
</feature>
<feature type="helix" evidence="28">
    <location>
        <begin position="334"/>
        <end position="338"/>
    </location>
</feature>
<feature type="strand" evidence="29">
    <location>
        <begin position="340"/>
        <end position="342"/>
    </location>
</feature>
<feature type="helix" evidence="28">
    <location>
        <begin position="343"/>
        <end position="352"/>
    </location>
</feature>
<feature type="strand" evidence="28">
    <location>
        <begin position="355"/>
        <end position="358"/>
    </location>
</feature>
<feature type="strand" evidence="28">
    <location>
        <begin position="363"/>
        <end position="375"/>
    </location>
</feature>
<feature type="helix" evidence="28">
    <location>
        <begin position="376"/>
        <end position="393"/>
    </location>
</feature>
<feature type="strand" evidence="32">
    <location>
        <begin position="400"/>
        <end position="405"/>
    </location>
</feature>
<feature type="turn" evidence="32">
    <location>
        <begin position="413"/>
        <end position="415"/>
    </location>
</feature>
<feature type="strand" evidence="27">
    <location>
        <begin position="427"/>
        <end position="432"/>
    </location>
</feature>
<feature type="helix" evidence="27">
    <location>
        <begin position="433"/>
        <end position="435"/>
    </location>
</feature>
<feature type="turn" evidence="27">
    <location>
        <begin position="436"/>
        <end position="438"/>
    </location>
</feature>
<feature type="turn" evidence="27">
    <location>
        <begin position="441"/>
        <end position="444"/>
    </location>
</feature>
<feature type="helix" evidence="27">
    <location>
        <begin position="446"/>
        <end position="453"/>
    </location>
</feature>
<feature type="strand" evidence="27">
    <location>
        <begin position="454"/>
        <end position="460"/>
    </location>
</feature>
<feature type="strand" evidence="27">
    <location>
        <begin position="472"/>
        <end position="479"/>
    </location>
</feature>
<feature type="helix" evidence="27">
    <location>
        <begin position="481"/>
        <end position="494"/>
    </location>
</feature>
<dbReference type="EMBL" id="U94832">
    <property type="protein sequence ID" value="AAB53222.1"/>
    <property type="molecule type" value="mRNA"/>
</dbReference>
<dbReference type="EMBL" id="AC011491">
    <property type="status" value="NOT_ANNOTATED_CDS"/>
    <property type="molecule type" value="Genomic_DNA"/>
</dbReference>
<dbReference type="EMBL" id="AC011539">
    <property type="status" value="NOT_ANNOTATED_CDS"/>
    <property type="molecule type" value="Genomic_DNA"/>
</dbReference>
<dbReference type="EMBL" id="BC085004">
    <property type="protein sequence ID" value="AAH85004.1"/>
    <property type="status" value="ALT_SEQ"/>
    <property type="molecule type" value="mRNA"/>
</dbReference>
<dbReference type="EMBL" id="AF093747">
    <property type="protein sequence ID" value="AAD29861.1"/>
    <property type="molecule type" value="Genomic_DNA"/>
</dbReference>
<dbReference type="EMBL" id="AF093745">
    <property type="protein sequence ID" value="AAD29861.1"/>
    <property type="status" value="JOINED"/>
    <property type="molecule type" value="Genomic_DNA"/>
</dbReference>
<dbReference type="EMBL" id="AF093748">
    <property type="protein sequence ID" value="AAD29862.1"/>
    <property type="molecule type" value="Genomic_DNA"/>
</dbReference>
<dbReference type="EMBL" id="U69126">
    <property type="protein sequence ID" value="AAC50892.1"/>
    <property type="status" value="ALT_FRAME"/>
    <property type="molecule type" value="mRNA"/>
</dbReference>
<dbReference type="EMBL" id="AB209662">
    <property type="protein sequence ID" value="BAD92899.1"/>
    <property type="molecule type" value="mRNA"/>
</dbReference>
<dbReference type="CCDS" id="CCDS45936.1"/>
<dbReference type="RefSeq" id="NP_003676.2">
    <property type="nucleotide sequence ID" value="NM_003685.3"/>
</dbReference>
<dbReference type="PDB" id="2HH2">
    <property type="method" value="NMR"/>
    <property type="chains" value="A=424-525"/>
</dbReference>
<dbReference type="PDB" id="2HH3">
    <property type="method" value="NMR"/>
    <property type="chains" value="A=318-418"/>
</dbReference>
<dbReference type="PDB" id="2JVZ">
    <property type="method" value="NMR"/>
    <property type="chains" value="A=233-396"/>
</dbReference>
<dbReference type="PDB" id="2OPU">
    <property type="method" value="NMR"/>
    <property type="chains" value="A=130-218"/>
</dbReference>
<dbReference type="PDB" id="2OPV">
    <property type="method" value="NMR"/>
    <property type="chains" value="A=221-305"/>
</dbReference>
<dbReference type="PDB" id="4B8T">
    <property type="method" value="NMR"/>
    <property type="chains" value="A=317-418"/>
</dbReference>
<dbReference type="PDBsum" id="2HH2"/>
<dbReference type="PDBsum" id="2HH3"/>
<dbReference type="PDBsum" id="2JVZ"/>
<dbReference type="PDBsum" id="2OPU"/>
<dbReference type="PDBsum" id="2OPV"/>
<dbReference type="PDBsum" id="4B8T"/>
<dbReference type="SMR" id="Q92945"/>
<dbReference type="BioGRID" id="114139">
    <property type="interactions" value="298"/>
</dbReference>
<dbReference type="CORUM" id="Q92945"/>
<dbReference type="DIP" id="DIP-48484N"/>
<dbReference type="ELM" id="Q92945"/>
<dbReference type="FunCoup" id="Q92945">
    <property type="interactions" value="4259"/>
</dbReference>
<dbReference type="IntAct" id="Q92945">
    <property type="interactions" value="101"/>
</dbReference>
<dbReference type="MINT" id="Q92945"/>
<dbReference type="STRING" id="9606.ENSP00000381216"/>
<dbReference type="ChEMBL" id="CHEMBL1795105"/>
<dbReference type="DrugBank" id="DB11638">
    <property type="generic name" value="Artenimol"/>
</dbReference>
<dbReference type="DrugBank" id="DB02709">
    <property type="generic name" value="Resveratrol"/>
</dbReference>
<dbReference type="GlyCosmos" id="Q92945">
    <property type="glycosylation" value="5 sites, 1 glycan"/>
</dbReference>
<dbReference type="GlyGen" id="Q92945">
    <property type="glycosylation" value="10 sites, 2 N-linked glycans (1 site), 1 O-linked glycan (8 sites)"/>
</dbReference>
<dbReference type="iPTMnet" id="Q92945"/>
<dbReference type="MetOSite" id="Q92945"/>
<dbReference type="PhosphoSitePlus" id="Q92945"/>
<dbReference type="SwissPalm" id="Q92945"/>
<dbReference type="BioMuta" id="KHSRP"/>
<dbReference type="DMDM" id="313104306"/>
<dbReference type="REPRODUCTION-2DPAGE" id="Q92945"/>
<dbReference type="jPOST" id="Q92945"/>
<dbReference type="MassIVE" id="Q92945"/>
<dbReference type="PaxDb" id="9606-ENSP00000381216"/>
<dbReference type="PeptideAtlas" id="Q92945"/>
<dbReference type="ProteomicsDB" id="75616"/>
<dbReference type="Pumba" id="Q92945"/>
<dbReference type="Antibodypedia" id="6316">
    <property type="antibodies" value="329 antibodies from 35 providers"/>
</dbReference>
<dbReference type="DNASU" id="8570"/>
<dbReference type="Ensembl" id="ENST00000398148.7">
    <property type="protein sequence ID" value="ENSP00000381216.2"/>
    <property type="gene ID" value="ENSG00000088247.19"/>
</dbReference>
<dbReference type="GeneID" id="8570"/>
<dbReference type="KEGG" id="hsa:8570"/>
<dbReference type="UCSC" id="uc002mer.5">
    <property type="organism name" value="human"/>
</dbReference>
<dbReference type="AGR" id="HGNC:6316"/>
<dbReference type="CTD" id="8570"/>
<dbReference type="DisGeNET" id="8570"/>
<dbReference type="GeneCards" id="KHSRP"/>
<dbReference type="HGNC" id="HGNC:6316">
    <property type="gene designation" value="KHSRP"/>
</dbReference>
<dbReference type="HPA" id="ENSG00000088247">
    <property type="expression patterns" value="Low tissue specificity"/>
</dbReference>
<dbReference type="MIM" id="603445">
    <property type="type" value="gene"/>
</dbReference>
<dbReference type="neXtProt" id="NX_Q92945"/>
<dbReference type="OpenTargets" id="ENSG00000088247"/>
<dbReference type="PharmGKB" id="PA30097"/>
<dbReference type="VEuPathDB" id="HostDB:ENSG00000088247"/>
<dbReference type="eggNOG" id="KOG1676">
    <property type="taxonomic scope" value="Eukaryota"/>
</dbReference>
<dbReference type="GeneTree" id="ENSGT00940000156051"/>
<dbReference type="HOGENOM" id="CLU_014285_1_0_1"/>
<dbReference type="InParanoid" id="Q92945"/>
<dbReference type="OrthoDB" id="5204190at2759"/>
<dbReference type="PAN-GO" id="Q92945">
    <property type="GO annotations" value="4 GO annotations based on evolutionary models"/>
</dbReference>
<dbReference type="PhylomeDB" id="Q92945"/>
<dbReference type="TreeFam" id="TF313654"/>
<dbReference type="PathwayCommons" id="Q92945"/>
<dbReference type="Reactome" id="R-HSA-380994">
    <property type="pathway name" value="ATF4 activates genes in response to endoplasmic reticulum stress"/>
</dbReference>
<dbReference type="Reactome" id="R-HSA-450604">
    <property type="pathway name" value="KSRP (KHSRP) binds and destabilizes mRNA"/>
</dbReference>
<dbReference type="SignaLink" id="Q92945"/>
<dbReference type="SIGNOR" id="Q92945"/>
<dbReference type="BioGRID-ORCS" id="8570">
    <property type="hits" value="79 hits in 1173 CRISPR screens"/>
</dbReference>
<dbReference type="CD-CODE" id="232F8A39">
    <property type="entry name" value="P-body"/>
</dbReference>
<dbReference type="CD-CODE" id="DEE660B4">
    <property type="entry name" value="Stress granule"/>
</dbReference>
<dbReference type="CD-CODE" id="F659AEC6">
    <property type="entry name" value="Pericentriolar compartment"/>
</dbReference>
<dbReference type="ChiTaRS" id="KHSRP">
    <property type="organism name" value="human"/>
</dbReference>
<dbReference type="EvolutionaryTrace" id="Q92945"/>
<dbReference type="GeneWiki" id="KHSRP"/>
<dbReference type="GenomeRNAi" id="8570"/>
<dbReference type="Pharos" id="Q92945">
    <property type="development level" value="Tbio"/>
</dbReference>
<dbReference type="PRO" id="PR:Q92945"/>
<dbReference type="Proteomes" id="UP000005640">
    <property type="component" value="Chromosome 19"/>
</dbReference>
<dbReference type="RNAct" id="Q92945">
    <property type="molecule type" value="protein"/>
</dbReference>
<dbReference type="Bgee" id="ENSG00000088247">
    <property type="expression patterns" value="Expressed in ventricular zone and 213 other cell types or tissues"/>
</dbReference>
<dbReference type="ExpressionAtlas" id="Q92945">
    <property type="expression patterns" value="baseline and differential"/>
</dbReference>
<dbReference type="GO" id="GO:0005737">
    <property type="term" value="C:cytoplasm"/>
    <property type="evidence" value="ECO:0000318"/>
    <property type="project" value="GO_Central"/>
</dbReference>
<dbReference type="GO" id="GO:0005829">
    <property type="term" value="C:cytosol"/>
    <property type="evidence" value="ECO:0000304"/>
    <property type="project" value="Reactome"/>
</dbReference>
<dbReference type="GO" id="GO:0016020">
    <property type="term" value="C:membrane"/>
    <property type="evidence" value="ECO:0007005"/>
    <property type="project" value="UniProtKB"/>
</dbReference>
<dbReference type="GO" id="GO:0005654">
    <property type="term" value="C:nucleoplasm"/>
    <property type="evidence" value="ECO:0000314"/>
    <property type="project" value="HPA"/>
</dbReference>
<dbReference type="GO" id="GO:0005634">
    <property type="term" value="C:nucleus"/>
    <property type="evidence" value="ECO:0000318"/>
    <property type="project" value="GO_Central"/>
</dbReference>
<dbReference type="GO" id="GO:0003677">
    <property type="term" value="F:DNA binding"/>
    <property type="evidence" value="ECO:0007669"/>
    <property type="project" value="UniProtKB-KW"/>
</dbReference>
<dbReference type="GO" id="GO:0035925">
    <property type="term" value="F:mRNA 3'-UTR AU-rich region binding"/>
    <property type="evidence" value="ECO:0000314"/>
    <property type="project" value="UniProtKB"/>
</dbReference>
<dbReference type="GO" id="GO:0003729">
    <property type="term" value="F:mRNA binding"/>
    <property type="evidence" value="ECO:0000318"/>
    <property type="project" value="GO_Central"/>
</dbReference>
<dbReference type="GO" id="GO:0044183">
    <property type="term" value="F:protein folding chaperone"/>
    <property type="evidence" value="ECO:0000269"/>
    <property type="project" value="DisProt"/>
</dbReference>
<dbReference type="GO" id="GO:0003723">
    <property type="term" value="F:RNA binding"/>
    <property type="evidence" value="ECO:0007005"/>
    <property type="project" value="UniProtKB"/>
</dbReference>
<dbReference type="GO" id="GO:0061158">
    <property type="term" value="P:3'-UTR-mediated mRNA destabilization"/>
    <property type="evidence" value="ECO:0000314"/>
    <property type="project" value="UniProtKB"/>
</dbReference>
<dbReference type="GO" id="GO:0071345">
    <property type="term" value="P:cellular response to cytokine stimulus"/>
    <property type="evidence" value="ECO:0000315"/>
    <property type="project" value="UniProtKB"/>
</dbReference>
<dbReference type="GO" id="GO:0010586">
    <property type="term" value="P:miRNA metabolic process"/>
    <property type="evidence" value="ECO:0000315"/>
    <property type="project" value="UniProtKB"/>
</dbReference>
<dbReference type="GO" id="GO:0006397">
    <property type="term" value="P:mRNA processing"/>
    <property type="evidence" value="ECO:0000304"/>
    <property type="project" value="ProtInc"/>
</dbReference>
<dbReference type="GO" id="GO:0051028">
    <property type="term" value="P:mRNA transport"/>
    <property type="evidence" value="ECO:0007669"/>
    <property type="project" value="UniProtKB-KW"/>
</dbReference>
<dbReference type="GO" id="GO:0010989">
    <property type="term" value="P:negative regulation of low-density lipoprotein particle clearance"/>
    <property type="evidence" value="ECO:0000316"/>
    <property type="project" value="BHF-UCL"/>
</dbReference>
<dbReference type="GO" id="GO:0045019">
    <property type="term" value="P:negative regulation of nitric oxide biosynthetic process"/>
    <property type="evidence" value="ECO:0000314"/>
    <property type="project" value="UniProtKB"/>
</dbReference>
<dbReference type="GO" id="GO:0061014">
    <property type="term" value="P:positive regulation of mRNA catabolic process"/>
    <property type="evidence" value="ECO:0000314"/>
    <property type="project" value="UniProtKB"/>
</dbReference>
<dbReference type="GO" id="GO:0043488">
    <property type="term" value="P:regulation of mRNA stability"/>
    <property type="evidence" value="ECO:0000314"/>
    <property type="project" value="UniProtKB"/>
</dbReference>
<dbReference type="GO" id="GO:0006357">
    <property type="term" value="P:regulation of transcription by RNA polymerase II"/>
    <property type="evidence" value="ECO:0000318"/>
    <property type="project" value="GO_Central"/>
</dbReference>
<dbReference type="GO" id="GO:0008380">
    <property type="term" value="P:RNA splicing"/>
    <property type="evidence" value="ECO:0000304"/>
    <property type="project" value="UniProtKB"/>
</dbReference>
<dbReference type="GO" id="GO:0000375">
    <property type="term" value="P:RNA splicing, via transesterification reactions"/>
    <property type="evidence" value="ECO:0000304"/>
    <property type="project" value="UniProtKB"/>
</dbReference>
<dbReference type="CDD" id="cd22479">
    <property type="entry name" value="KH-I_FUBP2_rpt1"/>
    <property type="match status" value="1"/>
</dbReference>
<dbReference type="CDD" id="cd22482">
    <property type="entry name" value="KH-I_FUBP2_rpt2"/>
    <property type="match status" value="1"/>
</dbReference>
<dbReference type="CDD" id="cd22485">
    <property type="entry name" value="KH-I_FUBP2_rpt3"/>
    <property type="match status" value="1"/>
</dbReference>
<dbReference type="CDD" id="cd22488">
    <property type="entry name" value="KH-I_FUBP2_rpt4"/>
    <property type="match status" value="1"/>
</dbReference>
<dbReference type="DisProt" id="DP01590"/>
<dbReference type="FunFam" id="3.30.1370.10:FF:000007">
    <property type="entry name" value="far upstream element-binding protein 1 isoform X1"/>
    <property type="match status" value="1"/>
</dbReference>
<dbReference type="FunFam" id="3.30.1370.10:FF:000008">
    <property type="entry name" value="far upstream element-binding protein 1 isoform X1"/>
    <property type="match status" value="1"/>
</dbReference>
<dbReference type="FunFam" id="3.30.1370.10:FF:000010">
    <property type="entry name" value="far upstream element-binding protein 1 isoform X1"/>
    <property type="match status" value="1"/>
</dbReference>
<dbReference type="FunFam" id="3.30.1370.10:FF:000049">
    <property type="entry name" value="far upstream element-binding protein 2"/>
    <property type="match status" value="1"/>
</dbReference>
<dbReference type="Gene3D" id="3.30.1370.10">
    <property type="entry name" value="K Homology domain, type 1"/>
    <property type="match status" value="4"/>
</dbReference>
<dbReference type="InterPro" id="IPR015096">
    <property type="entry name" value="FUBP_C"/>
</dbReference>
<dbReference type="InterPro" id="IPR047372">
    <property type="entry name" value="KH-I_FUBP2_rpt1"/>
</dbReference>
<dbReference type="InterPro" id="IPR047369">
    <property type="entry name" value="KH-I_FUBP2_rpt2"/>
</dbReference>
<dbReference type="InterPro" id="IPR047370">
    <property type="entry name" value="KH-I_FUBP2_rpt3"/>
</dbReference>
<dbReference type="InterPro" id="IPR047371">
    <property type="entry name" value="KH-I_FUBP2_rpt4"/>
</dbReference>
<dbReference type="InterPro" id="IPR004087">
    <property type="entry name" value="KH_dom"/>
</dbReference>
<dbReference type="InterPro" id="IPR004088">
    <property type="entry name" value="KH_dom_type_1"/>
</dbReference>
<dbReference type="InterPro" id="IPR036612">
    <property type="entry name" value="KH_dom_type_1_sf"/>
</dbReference>
<dbReference type="PANTHER" id="PTHR10288">
    <property type="entry name" value="KH DOMAIN CONTAINING RNA BINDING PROTEIN"/>
    <property type="match status" value="1"/>
</dbReference>
<dbReference type="Pfam" id="PF09005">
    <property type="entry name" value="FUBP_C"/>
    <property type="match status" value="2"/>
</dbReference>
<dbReference type="Pfam" id="PF00013">
    <property type="entry name" value="KH_1"/>
    <property type="match status" value="4"/>
</dbReference>
<dbReference type="SMART" id="SM00322">
    <property type="entry name" value="KH"/>
    <property type="match status" value="4"/>
</dbReference>
<dbReference type="SUPFAM" id="SSF54791">
    <property type="entry name" value="Eukaryotic type KH-domain (KH-domain type I)"/>
    <property type="match status" value="4"/>
</dbReference>
<dbReference type="PROSITE" id="PS50084">
    <property type="entry name" value="KH_TYPE_1"/>
    <property type="match status" value="4"/>
</dbReference>
<protein>
    <recommendedName>
        <fullName>Far upstream element-binding protein 2</fullName>
        <shortName>FUSE-binding protein 2</shortName>
    </recommendedName>
    <alternativeName>
        <fullName>KH type-splicing regulatory protein</fullName>
        <shortName>KSRP</shortName>
    </alternativeName>
    <alternativeName>
        <fullName>p75</fullName>
    </alternativeName>
</protein>